<protein>
    <recommendedName>
        <fullName evidence="1">Ribonuclease HIII</fullName>
        <shortName evidence="1">RNase HIII</shortName>
        <ecNumber evidence="1">3.1.26.4</ecNumber>
    </recommendedName>
</protein>
<keyword id="KW-0963">Cytoplasm</keyword>
<keyword id="KW-0255">Endonuclease</keyword>
<keyword id="KW-0378">Hydrolase</keyword>
<keyword id="KW-0460">Magnesium</keyword>
<keyword id="KW-0479">Metal-binding</keyword>
<keyword id="KW-0540">Nuclease</keyword>
<keyword id="KW-1185">Reference proteome</keyword>
<evidence type="ECO:0000255" key="1">
    <source>
        <dbReference type="HAMAP-Rule" id="MF_00053"/>
    </source>
</evidence>
<evidence type="ECO:0000255" key="2">
    <source>
        <dbReference type="PROSITE-ProRule" id="PRU01319"/>
    </source>
</evidence>
<dbReference type="EC" id="3.1.26.4" evidence="1"/>
<dbReference type="EMBL" id="CP000410">
    <property type="protein sequence ID" value="ABJ54417.1"/>
    <property type="molecule type" value="Genomic_DNA"/>
</dbReference>
<dbReference type="RefSeq" id="WP_000146861.1">
    <property type="nucleotide sequence ID" value="NZ_JAMLJR010000009.1"/>
</dbReference>
<dbReference type="SMR" id="Q04M70"/>
<dbReference type="PaxDb" id="373153-SPD_0368"/>
<dbReference type="KEGG" id="spd:SPD_0368"/>
<dbReference type="eggNOG" id="COG1039">
    <property type="taxonomic scope" value="Bacteria"/>
</dbReference>
<dbReference type="HOGENOM" id="CLU_059546_1_0_9"/>
<dbReference type="BioCyc" id="SPNE373153:G1G6V-405-MONOMER"/>
<dbReference type="Proteomes" id="UP000001452">
    <property type="component" value="Chromosome"/>
</dbReference>
<dbReference type="GO" id="GO:0005737">
    <property type="term" value="C:cytoplasm"/>
    <property type="evidence" value="ECO:0007669"/>
    <property type="project" value="UniProtKB-SubCell"/>
</dbReference>
<dbReference type="GO" id="GO:0032299">
    <property type="term" value="C:ribonuclease H2 complex"/>
    <property type="evidence" value="ECO:0007669"/>
    <property type="project" value="TreeGrafter"/>
</dbReference>
<dbReference type="GO" id="GO:0000287">
    <property type="term" value="F:magnesium ion binding"/>
    <property type="evidence" value="ECO:0007669"/>
    <property type="project" value="UniProtKB-UniRule"/>
</dbReference>
<dbReference type="GO" id="GO:0003723">
    <property type="term" value="F:RNA binding"/>
    <property type="evidence" value="ECO:0007669"/>
    <property type="project" value="InterPro"/>
</dbReference>
<dbReference type="GO" id="GO:0004523">
    <property type="term" value="F:RNA-DNA hybrid ribonuclease activity"/>
    <property type="evidence" value="ECO:0007669"/>
    <property type="project" value="UniProtKB-UniRule"/>
</dbReference>
<dbReference type="GO" id="GO:0043137">
    <property type="term" value="P:DNA replication, removal of RNA primer"/>
    <property type="evidence" value="ECO:0007669"/>
    <property type="project" value="TreeGrafter"/>
</dbReference>
<dbReference type="GO" id="GO:0006298">
    <property type="term" value="P:mismatch repair"/>
    <property type="evidence" value="ECO:0007669"/>
    <property type="project" value="TreeGrafter"/>
</dbReference>
<dbReference type="CDD" id="cd06590">
    <property type="entry name" value="RNase_HII_bacteria_HIII_like"/>
    <property type="match status" value="1"/>
</dbReference>
<dbReference type="CDD" id="cd14796">
    <property type="entry name" value="RNAse_HIII_N"/>
    <property type="match status" value="1"/>
</dbReference>
<dbReference type="FunFam" id="3.30.420.10:FF:000047">
    <property type="entry name" value="Ribonuclease HIII"/>
    <property type="match status" value="1"/>
</dbReference>
<dbReference type="Gene3D" id="3.30.420.10">
    <property type="entry name" value="Ribonuclease H-like superfamily/Ribonuclease H"/>
    <property type="match status" value="1"/>
</dbReference>
<dbReference type="Gene3D" id="3.30.310.10">
    <property type="entry name" value="TATA-Binding Protein"/>
    <property type="match status" value="1"/>
</dbReference>
<dbReference type="HAMAP" id="MF_00053">
    <property type="entry name" value="RNase_HIII"/>
    <property type="match status" value="1"/>
</dbReference>
<dbReference type="InterPro" id="IPR001352">
    <property type="entry name" value="RNase_HII/HIII"/>
</dbReference>
<dbReference type="InterPro" id="IPR024567">
    <property type="entry name" value="RNase_HII/HIII_dom"/>
</dbReference>
<dbReference type="InterPro" id="IPR004641">
    <property type="entry name" value="RNase_HIII"/>
</dbReference>
<dbReference type="InterPro" id="IPR024568">
    <property type="entry name" value="RNase_HIII_N"/>
</dbReference>
<dbReference type="InterPro" id="IPR012337">
    <property type="entry name" value="RNaseH-like_sf"/>
</dbReference>
<dbReference type="InterPro" id="IPR036397">
    <property type="entry name" value="RNaseH_sf"/>
</dbReference>
<dbReference type="InterPro" id="IPR012295">
    <property type="entry name" value="TBP_dom_sf"/>
</dbReference>
<dbReference type="NCBIfam" id="TIGR00716">
    <property type="entry name" value="rnhC"/>
    <property type="match status" value="1"/>
</dbReference>
<dbReference type="PANTHER" id="PTHR10954:SF23">
    <property type="entry name" value="RIBONUCLEASE"/>
    <property type="match status" value="1"/>
</dbReference>
<dbReference type="PANTHER" id="PTHR10954">
    <property type="entry name" value="RIBONUCLEASE H2 SUBUNIT A"/>
    <property type="match status" value="1"/>
</dbReference>
<dbReference type="Pfam" id="PF11858">
    <property type="entry name" value="DUF3378"/>
    <property type="match status" value="1"/>
</dbReference>
<dbReference type="Pfam" id="PF01351">
    <property type="entry name" value="RNase_HII"/>
    <property type="match status" value="1"/>
</dbReference>
<dbReference type="PIRSF" id="PIRSF037748">
    <property type="entry name" value="RnhC"/>
    <property type="match status" value="1"/>
</dbReference>
<dbReference type="SUPFAM" id="SSF53098">
    <property type="entry name" value="Ribonuclease H-like"/>
    <property type="match status" value="1"/>
</dbReference>
<dbReference type="PROSITE" id="PS51975">
    <property type="entry name" value="RNASE_H_2"/>
    <property type="match status" value="1"/>
</dbReference>
<proteinExistence type="inferred from homology"/>
<accession>Q04M70</accession>
<organism>
    <name type="scientific">Streptococcus pneumoniae serotype 2 (strain D39 / NCTC 7466)</name>
    <dbReference type="NCBI Taxonomy" id="373153"/>
    <lineage>
        <taxon>Bacteria</taxon>
        <taxon>Bacillati</taxon>
        <taxon>Bacillota</taxon>
        <taxon>Bacilli</taxon>
        <taxon>Lactobacillales</taxon>
        <taxon>Streptococcaceae</taxon>
        <taxon>Streptococcus</taxon>
    </lineage>
</organism>
<feature type="chain" id="PRO_1000031242" description="Ribonuclease HIII">
    <location>
        <begin position="1"/>
        <end position="290"/>
    </location>
</feature>
<feature type="domain" description="RNase H type-2" evidence="2">
    <location>
        <begin position="78"/>
        <end position="290"/>
    </location>
</feature>
<feature type="binding site" evidence="1">
    <location>
        <position position="84"/>
    </location>
    <ligand>
        <name>a divalent metal cation</name>
        <dbReference type="ChEBI" id="CHEBI:60240"/>
    </ligand>
</feature>
<feature type="binding site" evidence="1">
    <location>
        <position position="85"/>
    </location>
    <ligand>
        <name>a divalent metal cation</name>
        <dbReference type="ChEBI" id="CHEBI:60240"/>
    </ligand>
</feature>
<feature type="binding site" evidence="1">
    <location>
        <position position="187"/>
    </location>
    <ligand>
        <name>a divalent metal cation</name>
        <dbReference type="ChEBI" id="CHEBI:60240"/>
    </ligand>
</feature>
<comment type="function">
    <text evidence="1">Endonuclease that specifically degrades the RNA of RNA-DNA hybrids.</text>
</comment>
<comment type="catalytic activity">
    <reaction evidence="1">
        <text>Endonucleolytic cleavage to 5'-phosphomonoester.</text>
        <dbReference type="EC" id="3.1.26.4"/>
    </reaction>
</comment>
<comment type="cofactor">
    <cofactor evidence="1">
        <name>Mn(2+)</name>
        <dbReference type="ChEBI" id="CHEBI:29035"/>
    </cofactor>
    <cofactor evidence="1">
        <name>Mg(2+)</name>
        <dbReference type="ChEBI" id="CHEBI:18420"/>
    </cofactor>
    <text evidence="1">Manganese or magnesium. Binds 1 divalent metal ion per monomer in the absence of substrate. May bind a second metal ion after substrate binding.</text>
</comment>
<comment type="subcellular location">
    <subcellularLocation>
        <location evidence="1">Cytoplasm</location>
    </subcellularLocation>
</comment>
<comment type="similarity">
    <text evidence="1">Belongs to the RNase HII family. RnhC subfamily.</text>
</comment>
<sequence>MASITLTPSEKDIQAFLEHYQTSLAPSKNPYIRYFLKLPQATVSIYTSGKILLQGEGAEKYASFFGYQAVEQTSGQNLPLIGTDEVGNGSYFGGLAVVAAFVTPDQHDFLRKLGVGDSKTLTDQKIRQIAPILKEKIQHQALLLSPSKYNEVIGDRYNAVSVKVALHNQAIYLLLQKGVQPEKIVIDAFTSAKNYDKYLAQETNRFSNPISLEEKAEGKYLAVAVSSVIARDLFLENLENLGRELGYQLPSGAGTASDKVASQILQAYGMQGLNFCAKLHFKNTEKAKNA</sequence>
<name>RNH3_STRP2</name>
<reference key="1">
    <citation type="journal article" date="2007" name="J. Bacteriol.">
        <title>Genome sequence of Avery's virulent serotype 2 strain D39 of Streptococcus pneumoniae and comparison with that of unencapsulated laboratory strain R6.</title>
        <authorList>
            <person name="Lanie J.A."/>
            <person name="Ng W.-L."/>
            <person name="Kazmierczak K.M."/>
            <person name="Andrzejewski T.M."/>
            <person name="Davidsen T.M."/>
            <person name="Wayne K.J."/>
            <person name="Tettelin H."/>
            <person name="Glass J.I."/>
            <person name="Winkler M.E."/>
        </authorList>
    </citation>
    <scope>NUCLEOTIDE SEQUENCE [LARGE SCALE GENOMIC DNA]</scope>
    <source>
        <strain>D39 / NCTC 7466</strain>
    </source>
</reference>
<gene>
    <name evidence="1" type="primary">rnhC</name>
    <name type="ordered locus">SPD_0368</name>
</gene>